<keyword id="KW-0064">Aspartyl protease</keyword>
<keyword id="KW-0165">Cleavage on pair of basic residues</keyword>
<keyword id="KW-0229">DNA integration</keyword>
<keyword id="KW-0233">DNA recombination</keyword>
<keyword id="KW-0238">DNA-binding</keyword>
<keyword id="KW-0255">Endonuclease</keyword>
<keyword id="KW-0378">Hydrolase</keyword>
<keyword id="KW-0479">Metal-binding</keyword>
<keyword id="KW-0511">Multifunctional enzyme</keyword>
<keyword id="KW-0540">Nuclease</keyword>
<keyword id="KW-0548">Nucleotidyltransferase</keyword>
<keyword id="KW-0645">Protease</keyword>
<keyword id="KW-0695">RNA-directed DNA polymerase</keyword>
<keyword id="KW-0808">Transferase</keyword>
<keyword id="KW-1179">Viral genome integration</keyword>
<keyword id="KW-1160">Virus entry into host cell</keyword>
<keyword id="KW-0862">Zinc</keyword>
<keyword id="KW-0863">Zinc-finger</keyword>
<organismHost>
    <name type="scientific">Equus asinus</name>
    <name type="common">Donkey</name>
    <name type="synonym">Equus africanus asinus</name>
    <dbReference type="NCBI Taxonomy" id="9793"/>
</organismHost>
<organismHost>
    <name type="scientific">Equus caballus</name>
    <name type="common">Horse</name>
    <dbReference type="NCBI Taxonomy" id="9796"/>
</organismHost>
<feature type="chain" id="PRO_0000038835" description="Protease">
    <location>
        <begin position="1"/>
        <end position="195"/>
    </location>
</feature>
<feature type="chain" id="PRO_0000038836" description="Reverse transcriptase/ribonuclease H">
    <location>
        <begin position="196"/>
        <end position="913"/>
    </location>
</feature>
<feature type="chain" id="PRO_0000038837" description="Integrase">
    <location>
        <begin position="914"/>
        <end position="1145"/>
    </location>
</feature>
<feature type="domain" description="Peptidase A2" evidence="2">
    <location>
        <begin position="100"/>
        <end position="174"/>
    </location>
</feature>
<feature type="domain" description="Reverse transcriptase" evidence="3">
    <location>
        <begin position="230"/>
        <end position="418"/>
    </location>
</feature>
<feature type="domain" description="RNase H type-1" evidence="4">
    <location>
        <begin position="616"/>
        <end position="739"/>
    </location>
</feature>
<feature type="domain" description="Integrase catalytic" evidence="6">
    <location>
        <begin position="920"/>
        <end position="1077"/>
    </location>
</feature>
<feature type="zinc finger region" description="Integrase-type" evidence="5">
    <location>
        <begin position="877"/>
        <end position="918"/>
    </location>
</feature>
<feature type="DNA-binding region" description="Integrase-type" evidence="7">
    <location>
        <begin position="1095"/>
        <end position="1143"/>
    </location>
</feature>
<feature type="region of interest" description="Disordered" evidence="9">
    <location>
        <begin position="13"/>
        <end position="77"/>
    </location>
</feature>
<feature type="compositionally biased region" description="Polar residues" evidence="9">
    <location>
        <begin position="29"/>
        <end position="41"/>
    </location>
</feature>
<feature type="compositionally biased region" description="Basic and acidic residues" evidence="9">
    <location>
        <begin position="45"/>
        <end position="59"/>
    </location>
</feature>
<feature type="compositionally biased region" description="Polar residues" evidence="9">
    <location>
        <begin position="66"/>
        <end position="76"/>
    </location>
</feature>
<feature type="active site" evidence="8">
    <location>
        <position position="105"/>
    </location>
</feature>
<feature type="binding site" evidence="5">
    <location>
        <position position="886"/>
    </location>
    <ligand>
        <name>Zn(2+)</name>
        <dbReference type="ChEBI" id="CHEBI:29105"/>
    </ligand>
</feature>
<feature type="binding site" evidence="5">
    <location>
        <position position="890"/>
    </location>
    <ligand>
        <name>Zn(2+)</name>
        <dbReference type="ChEBI" id="CHEBI:29105"/>
    </ligand>
</feature>
<feature type="binding site" evidence="5">
    <location>
        <position position="914"/>
    </location>
    <ligand>
        <name>Zn(2+)</name>
        <dbReference type="ChEBI" id="CHEBI:29105"/>
    </ligand>
</feature>
<feature type="binding site" evidence="5">
    <location>
        <position position="917"/>
    </location>
    <ligand>
        <name>Zn(2+)</name>
        <dbReference type="ChEBI" id="CHEBI:29105"/>
    </ligand>
</feature>
<dbReference type="EC" id="3.4.23.-"/>
<dbReference type="EC" id="2.7.7.49"/>
<dbReference type="EC" id="3.1.26.13"/>
<dbReference type="EC" id="3.1.13.2"/>
<dbReference type="EC" id="2.7.7.-" evidence="1"/>
<dbReference type="EC" id="3.1.-.-" evidence="1"/>
<dbReference type="PIR" id="A03970">
    <property type="entry name" value="GNLJEV"/>
</dbReference>
<dbReference type="SMR" id="P03371"/>
<dbReference type="DrugBank" id="DB03413">
    <property type="generic name" value="Deoxyuridine-5'-Diphosphate"/>
</dbReference>
<dbReference type="BRENDA" id="3.4.23.B3">
    <property type="organism ID" value="2115"/>
</dbReference>
<dbReference type="GO" id="GO:0004190">
    <property type="term" value="F:aspartic-type endopeptidase activity"/>
    <property type="evidence" value="ECO:0007669"/>
    <property type="project" value="UniProtKB-KW"/>
</dbReference>
<dbReference type="GO" id="GO:0003677">
    <property type="term" value="F:DNA binding"/>
    <property type="evidence" value="ECO:0007669"/>
    <property type="project" value="UniProtKB-KW"/>
</dbReference>
<dbReference type="GO" id="GO:0004533">
    <property type="term" value="F:exoribonuclease H activity"/>
    <property type="evidence" value="ECO:0007669"/>
    <property type="project" value="UniProtKB-EC"/>
</dbReference>
<dbReference type="GO" id="GO:0035613">
    <property type="term" value="F:RNA stem-loop binding"/>
    <property type="evidence" value="ECO:0007669"/>
    <property type="project" value="TreeGrafter"/>
</dbReference>
<dbReference type="GO" id="GO:0003964">
    <property type="term" value="F:RNA-directed DNA polymerase activity"/>
    <property type="evidence" value="ECO:0007669"/>
    <property type="project" value="UniProtKB-KW"/>
</dbReference>
<dbReference type="GO" id="GO:0004523">
    <property type="term" value="F:RNA-DNA hybrid ribonuclease activity"/>
    <property type="evidence" value="ECO:0007669"/>
    <property type="project" value="InterPro"/>
</dbReference>
<dbReference type="GO" id="GO:0008270">
    <property type="term" value="F:zinc ion binding"/>
    <property type="evidence" value="ECO:0007669"/>
    <property type="project" value="UniProtKB-KW"/>
</dbReference>
<dbReference type="GO" id="GO:0015074">
    <property type="term" value="P:DNA integration"/>
    <property type="evidence" value="ECO:0007669"/>
    <property type="project" value="UniProtKB-KW"/>
</dbReference>
<dbReference type="GO" id="GO:0006310">
    <property type="term" value="P:DNA recombination"/>
    <property type="evidence" value="ECO:0007669"/>
    <property type="project" value="UniProtKB-KW"/>
</dbReference>
<dbReference type="GO" id="GO:0075713">
    <property type="term" value="P:establishment of integrated proviral latency"/>
    <property type="evidence" value="ECO:0007669"/>
    <property type="project" value="UniProtKB-KW"/>
</dbReference>
<dbReference type="GO" id="GO:0006508">
    <property type="term" value="P:proteolysis"/>
    <property type="evidence" value="ECO:0007669"/>
    <property type="project" value="UniProtKB-KW"/>
</dbReference>
<dbReference type="GO" id="GO:0046718">
    <property type="term" value="P:symbiont entry into host cell"/>
    <property type="evidence" value="ECO:0007669"/>
    <property type="project" value="UniProtKB-KW"/>
</dbReference>
<dbReference type="GO" id="GO:0044826">
    <property type="term" value="P:viral genome integration into host DNA"/>
    <property type="evidence" value="ECO:0007669"/>
    <property type="project" value="UniProtKB-KW"/>
</dbReference>
<dbReference type="CDD" id="cd09276">
    <property type="entry name" value="Rnase_HI_RT_non_LTR"/>
    <property type="match status" value="1"/>
</dbReference>
<dbReference type="CDD" id="cd07557">
    <property type="entry name" value="trimeric_dUTPase"/>
    <property type="match status" value="1"/>
</dbReference>
<dbReference type="FunFam" id="3.30.420.10:FF:000212">
    <property type="entry name" value="Pol polyprotein"/>
    <property type="match status" value="1"/>
</dbReference>
<dbReference type="Gene3D" id="1.10.10.200">
    <property type="match status" value="1"/>
</dbReference>
<dbReference type="Gene3D" id="2.70.40.10">
    <property type="match status" value="1"/>
</dbReference>
<dbReference type="Gene3D" id="3.30.70.270">
    <property type="match status" value="3"/>
</dbReference>
<dbReference type="Gene3D" id="2.40.70.10">
    <property type="entry name" value="Acid Proteases"/>
    <property type="match status" value="1"/>
</dbReference>
<dbReference type="Gene3D" id="3.10.10.10">
    <property type="entry name" value="HIV Type 1 Reverse Transcriptase, subunit A, domain 1"/>
    <property type="match status" value="1"/>
</dbReference>
<dbReference type="Gene3D" id="2.30.30.10">
    <property type="entry name" value="Integrase, C-terminal domain superfamily, retroviral"/>
    <property type="match status" value="1"/>
</dbReference>
<dbReference type="Gene3D" id="3.30.420.10">
    <property type="entry name" value="Ribonuclease H-like superfamily/Ribonuclease H"/>
    <property type="match status" value="2"/>
</dbReference>
<dbReference type="InterPro" id="IPR001969">
    <property type="entry name" value="Aspartic_peptidase_AS"/>
</dbReference>
<dbReference type="InterPro" id="IPR043502">
    <property type="entry name" value="DNA/RNA_pol_sf"/>
</dbReference>
<dbReference type="InterPro" id="IPR029054">
    <property type="entry name" value="dUTPase-like"/>
</dbReference>
<dbReference type="InterPro" id="IPR036157">
    <property type="entry name" value="dUTPase-like_sf"/>
</dbReference>
<dbReference type="InterPro" id="IPR033704">
    <property type="entry name" value="dUTPase_trimeric"/>
</dbReference>
<dbReference type="InterPro" id="IPR017856">
    <property type="entry name" value="Integrase-like_N"/>
</dbReference>
<dbReference type="InterPro" id="IPR036862">
    <property type="entry name" value="Integrase_C_dom_sf_retrovir"/>
</dbReference>
<dbReference type="InterPro" id="IPR001037">
    <property type="entry name" value="Integrase_C_retrovir"/>
</dbReference>
<dbReference type="InterPro" id="IPR001584">
    <property type="entry name" value="Integrase_cat-core"/>
</dbReference>
<dbReference type="InterPro" id="IPR003308">
    <property type="entry name" value="Integrase_Zn-bd_dom_N"/>
</dbReference>
<dbReference type="InterPro" id="IPR001995">
    <property type="entry name" value="Peptidase_A2_cat"/>
</dbReference>
<dbReference type="InterPro" id="IPR021109">
    <property type="entry name" value="Peptidase_aspartic_dom_sf"/>
</dbReference>
<dbReference type="InterPro" id="IPR018061">
    <property type="entry name" value="Retropepsins"/>
</dbReference>
<dbReference type="InterPro" id="IPR043128">
    <property type="entry name" value="Rev_trsase/Diguanyl_cyclase"/>
</dbReference>
<dbReference type="InterPro" id="IPR012337">
    <property type="entry name" value="RNaseH-like_sf"/>
</dbReference>
<dbReference type="InterPro" id="IPR002156">
    <property type="entry name" value="RNaseH_domain"/>
</dbReference>
<dbReference type="InterPro" id="IPR036397">
    <property type="entry name" value="RNaseH_sf"/>
</dbReference>
<dbReference type="InterPro" id="IPR000477">
    <property type="entry name" value="RT_dom"/>
</dbReference>
<dbReference type="InterPro" id="IPR010659">
    <property type="entry name" value="RVT_connect"/>
</dbReference>
<dbReference type="InterPro" id="IPR010661">
    <property type="entry name" value="RVT_thumb"/>
</dbReference>
<dbReference type="PANTHER" id="PTHR41694">
    <property type="entry name" value="ENDOGENOUS RETROVIRUS GROUP K MEMBER POL PROTEIN"/>
    <property type="match status" value="1"/>
</dbReference>
<dbReference type="PANTHER" id="PTHR41694:SF3">
    <property type="entry name" value="RNA-DIRECTED DNA POLYMERASE-RELATED"/>
    <property type="match status" value="1"/>
</dbReference>
<dbReference type="Pfam" id="PF00692">
    <property type="entry name" value="dUTPase"/>
    <property type="match status" value="1"/>
</dbReference>
<dbReference type="Pfam" id="PF00552">
    <property type="entry name" value="IN_DBD_C"/>
    <property type="match status" value="1"/>
</dbReference>
<dbReference type="Pfam" id="PF02022">
    <property type="entry name" value="Integrase_Zn"/>
    <property type="match status" value="1"/>
</dbReference>
<dbReference type="Pfam" id="PF00075">
    <property type="entry name" value="RNase_H"/>
    <property type="match status" value="1"/>
</dbReference>
<dbReference type="Pfam" id="PF00665">
    <property type="entry name" value="rve"/>
    <property type="match status" value="1"/>
</dbReference>
<dbReference type="Pfam" id="PF00077">
    <property type="entry name" value="RVP"/>
    <property type="match status" value="1"/>
</dbReference>
<dbReference type="Pfam" id="PF00078">
    <property type="entry name" value="RVT_1"/>
    <property type="match status" value="1"/>
</dbReference>
<dbReference type="Pfam" id="PF06815">
    <property type="entry name" value="RVT_connect"/>
    <property type="match status" value="1"/>
</dbReference>
<dbReference type="Pfam" id="PF06817">
    <property type="entry name" value="RVT_thumb"/>
    <property type="match status" value="1"/>
</dbReference>
<dbReference type="SUPFAM" id="SSF50630">
    <property type="entry name" value="Acid proteases"/>
    <property type="match status" value="1"/>
</dbReference>
<dbReference type="SUPFAM" id="SSF50122">
    <property type="entry name" value="DNA-binding domain of retroviral integrase"/>
    <property type="match status" value="1"/>
</dbReference>
<dbReference type="SUPFAM" id="SSF56672">
    <property type="entry name" value="DNA/RNA polymerases"/>
    <property type="match status" value="1"/>
</dbReference>
<dbReference type="SUPFAM" id="SSF51283">
    <property type="entry name" value="dUTPase-like"/>
    <property type="match status" value="1"/>
</dbReference>
<dbReference type="SUPFAM" id="SSF46919">
    <property type="entry name" value="N-terminal Zn binding domain of HIV integrase"/>
    <property type="match status" value="1"/>
</dbReference>
<dbReference type="SUPFAM" id="SSF53098">
    <property type="entry name" value="Ribonuclease H-like"/>
    <property type="match status" value="2"/>
</dbReference>
<dbReference type="PROSITE" id="PS50175">
    <property type="entry name" value="ASP_PROT_RETROV"/>
    <property type="match status" value="1"/>
</dbReference>
<dbReference type="PROSITE" id="PS00141">
    <property type="entry name" value="ASP_PROTEASE"/>
    <property type="match status" value="1"/>
</dbReference>
<dbReference type="PROSITE" id="PS50994">
    <property type="entry name" value="INTEGRASE"/>
    <property type="match status" value="1"/>
</dbReference>
<dbReference type="PROSITE" id="PS51027">
    <property type="entry name" value="INTEGRASE_DBD"/>
    <property type="match status" value="1"/>
</dbReference>
<dbReference type="PROSITE" id="PS50879">
    <property type="entry name" value="RNASE_H_1"/>
    <property type="match status" value="1"/>
</dbReference>
<dbReference type="PROSITE" id="PS50878">
    <property type="entry name" value="RT_POL"/>
    <property type="match status" value="1"/>
</dbReference>
<dbReference type="PROSITE" id="PS50876">
    <property type="entry name" value="ZF_INTEGRASE"/>
    <property type="match status" value="1"/>
</dbReference>
<name>POL_EIAVY</name>
<comment type="function">
    <text>During replicative cycle of retroviruses, the reverse-transcribed viral DNA is integrated into the host chromosome by the viral integrase enzyme. RNase H activity is associated with the reverse transcriptase.</text>
</comment>
<comment type="catalytic activity">
    <reaction>
        <text>Endohydrolysis of RNA in RNA/DNA hybrids. Three different cleavage modes: 1. sequence-specific internal cleavage of RNA. Human immunodeficiency virus type 1 and Moloney murine leukemia virus enzymes prefer to cleave the RNA strand one nucleotide away from the RNA-DNA junction. 2. RNA 5'-end directed cleavage 13-19 nucleotides from the RNA end. 3. DNA 3'-end directed cleavage 15-20 nucleotides away from the primer terminus.</text>
        <dbReference type="EC" id="3.1.26.13"/>
    </reaction>
</comment>
<comment type="catalytic activity">
    <reaction>
        <text>3'-end directed exonucleolytic cleavage of viral RNA-DNA hybrid.</text>
        <dbReference type="EC" id="3.1.13.2"/>
    </reaction>
</comment>
<comment type="catalytic activity">
    <reaction evidence="3">
        <text>DNA(n) + a 2'-deoxyribonucleoside 5'-triphosphate = DNA(n+1) + diphosphate</text>
        <dbReference type="Rhea" id="RHEA:22508"/>
        <dbReference type="Rhea" id="RHEA-COMP:17339"/>
        <dbReference type="Rhea" id="RHEA-COMP:17340"/>
        <dbReference type="ChEBI" id="CHEBI:33019"/>
        <dbReference type="ChEBI" id="CHEBI:61560"/>
        <dbReference type="ChEBI" id="CHEBI:173112"/>
        <dbReference type="EC" id="2.7.7.49"/>
    </reaction>
</comment>
<comment type="PTM">
    <text>Specific enzymatic cleavages in vivo yield mature proteins.</text>
</comment>
<comment type="similarity">
    <text evidence="10">Belongs to the retroviral Pol polyprotein family.</text>
</comment>
<comment type="caution">
    <text evidence="10">The original EMBL accession numbers (M11337 and M14855) assigned to this isolate (isolate Wyoming) have been made secondary to M16575 which is from a different isolate (clone 1365).</text>
</comment>
<organism>
    <name type="scientific">Equine infectious anemia virus (strain Wyoming)</name>
    <name type="common">EIAV</name>
    <dbReference type="NCBI Taxonomy" id="11672"/>
    <lineage>
        <taxon>Viruses</taxon>
        <taxon>Riboviria</taxon>
        <taxon>Pararnavirae</taxon>
        <taxon>Artverviricota</taxon>
        <taxon>Revtraviricetes</taxon>
        <taxon>Ortervirales</taxon>
        <taxon>Retroviridae</taxon>
        <taxon>Orthoretrovirinae</taxon>
        <taxon>Lentivirus</taxon>
        <taxon>Equine infectious anemia virus</taxon>
    </lineage>
</organism>
<protein>
    <recommendedName>
        <fullName>Pol polyprotein</fullName>
    </recommendedName>
    <component>
        <recommendedName>
            <fullName>Protease</fullName>
        </recommendedName>
        <alternativeName>
            <fullName>Retropepsin</fullName>
            <ecNumber>3.4.23.-</ecNumber>
        </alternativeName>
    </component>
    <component>
        <recommendedName>
            <fullName>Reverse transcriptase/ribonuclease H</fullName>
            <shortName>RT</shortName>
            <ecNumber>2.7.7.49</ecNumber>
            <ecNumber>3.1.26.13</ecNumber>
        </recommendedName>
        <alternativeName>
            <fullName>Exoribonuclease H</fullName>
            <ecNumber>3.1.13.2</ecNumber>
        </alternativeName>
    </component>
    <component>
        <recommendedName>
            <fullName>Integrase</fullName>
            <shortName>IN</shortName>
            <ecNumber evidence="1">2.7.7.-</ecNumber>
            <ecNumber evidence="1">3.1.-.-</ecNumber>
        </recommendedName>
    </component>
</protein>
<gene>
    <name type="primary">pol</name>
</gene>
<reference key="1">
    <citation type="journal article" date="1986" name="Science">
        <title>Equine infectious anemia virus gag and pol genes: relatedness to visna and AIDS virus.</title>
        <authorList>
            <person name="Stephens R.M."/>
            <person name="Casey J.W."/>
            <person name="Rice N.R."/>
        </authorList>
    </citation>
    <scope>NUCLEOTIDE SEQUENCE</scope>
</reference>
<reference key="2">
    <citation type="journal article" date="1986" name="Virology">
        <title>Lentivirus genomic organization: the complete nucleotide sequence of the env gene region of equine infectious anemia virus.</title>
        <authorList>
            <person name="Rushlow K."/>
            <person name="Olsen K."/>
            <person name="Stiegler G."/>
            <person name="Payne S.L."/>
            <person name="Montelaro R.C."/>
            <person name="Issel C.J."/>
        </authorList>
    </citation>
    <scope>NUCLEOTIDE SEQUENCE OF 1029-1145</scope>
</reference>
<sequence length="1145" mass="129520">TAWTFLKAMQKCSKKREARGSREAPETNFPDTTEESAQQICCTRDSSDSKSVPRSERNKKGIQCQGEGSSRGSQPGQFVGVTYNLEKRPTTIVLINDTPLNVLLDTGADTSVLTTAHYNRLKYRGRKYQGTGIIGVGGNVETFSTPVTIKKKGRHIKTRMLVADIPVTILGRDILQDLGAKLVLAQLSKEIKFRKIELKEGTMGPKIPQWPLTKEKLEGAKETVQRLLSEGKISEASDNNPYNSPIFVIKKRSGKWRLLQDLRELNKTVQVGTEISRGLPHPGGLIKCKHMTVLDIGDAYFTIPLDPEFRPYTAFTIPSINHQEPDKRYVWKCLPQGFVLSPYIYQKTLQEILQPFRERYPEVQLYQYMDDLFVGSNGSKKQHKELIIELRAILQKGFETPDDKLQEVPPYSWLGYQLCPENWKVQKMQLDMVKNPTLNDVQKLMGNITWMSSGVPGLTVKHIAATTKGCLELNQKVIWTEEAQKELEENNEKIKNAQGLQYYNPEEEMLCEVEITKNYEATYVIKQSQGILWAGKKIMKANKGWSTVKNLMLLLQHVATESITRVGKCPTFKVPFTKEQVMWEMQKGWYYSWLPEIVYTHQVVHDDWRMKLVEEPTSGITIYTDGGKQNGEGIAAYVTSNGRTKQKRLGPVTHQVAERMAIQMALEDTRDKQVNIVTDSYYCWKNITEGLGLEGPQNPWWPIIQNIREKEIVYFAWVPGHKGIYGNQLADEAAKIKEEIMLAYQGTQIKEKRDEDAGFDLCVPYDIMIPVSDTKIIPTDVKIQVPPNSFGWVTGKSSMAKQGLLINGGIIDEGYTGEIQVICTNIGKSNIKLIEGQKFAQLIILQHHSNSRQPWDENKISQRGDKGFGSTGVFWVENIQEAQDEHENWHTSPKILARNYKIPLTVAKQITQECPHCTKQGSGPAGCVMRSPNHWQADCTHLDNKIILHFVESNSGYIHATLLSKENALCTSLAILEWARLFSPKSLHTDNGTNFVAEPVVNLLKFLKIAHTTGIPYHPESQGIVERANRTLKEKIQSHRDNTQTLEAALQLALITCNKGRESMGGQTPWEVFITNQAQVIHEKLLLQQAQSSKKFCFYKIPGEHDWKGPTRVLWKGDGAVVVNDEGKGIIAVPLTRTKLLIKPN</sequence>
<proteinExistence type="inferred from homology"/>
<accession>P03371</accession>
<evidence type="ECO:0000250" key="1">
    <source>
        <dbReference type="UniProtKB" id="P04585"/>
    </source>
</evidence>
<evidence type="ECO:0000255" key="2">
    <source>
        <dbReference type="PROSITE-ProRule" id="PRU00275"/>
    </source>
</evidence>
<evidence type="ECO:0000255" key="3">
    <source>
        <dbReference type="PROSITE-ProRule" id="PRU00405"/>
    </source>
</evidence>
<evidence type="ECO:0000255" key="4">
    <source>
        <dbReference type="PROSITE-ProRule" id="PRU00408"/>
    </source>
</evidence>
<evidence type="ECO:0000255" key="5">
    <source>
        <dbReference type="PROSITE-ProRule" id="PRU00450"/>
    </source>
</evidence>
<evidence type="ECO:0000255" key="6">
    <source>
        <dbReference type="PROSITE-ProRule" id="PRU00457"/>
    </source>
</evidence>
<evidence type="ECO:0000255" key="7">
    <source>
        <dbReference type="PROSITE-ProRule" id="PRU00506"/>
    </source>
</evidence>
<evidence type="ECO:0000255" key="8">
    <source>
        <dbReference type="PROSITE-ProRule" id="PRU10094"/>
    </source>
</evidence>
<evidence type="ECO:0000256" key="9">
    <source>
        <dbReference type="SAM" id="MobiDB-lite"/>
    </source>
</evidence>
<evidence type="ECO:0000305" key="10"/>